<accession>Q0I1X5</accession>
<name>HLDE_HISS1</name>
<reference key="1">
    <citation type="journal article" date="2007" name="J. Bacteriol.">
        <title>Complete genome sequence of Haemophilus somnus (Histophilus somni) strain 129Pt and comparison to Haemophilus ducreyi 35000HP and Haemophilus influenzae Rd.</title>
        <authorList>
            <person name="Challacombe J.F."/>
            <person name="Duncan A.J."/>
            <person name="Brettin T.S."/>
            <person name="Bruce D."/>
            <person name="Chertkov O."/>
            <person name="Detter J.C."/>
            <person name="Han C.S."/>
            <person name="Misra M."/>
            <person name="Richardson P."/>
            <person name="Tapia R."/>
            <person name="Thayer N."/>
            <person name="Xie G."/>
            <person name="Inzana T.J."/>
        </authorList>
    </citation>
    <scope>NUCLEOTIDE SEQUENCE [LARGE SCALE GENOMIC DNA]</scope>
    <source>
        <strain>129Pt</strain>
    </source>
</reference>
<keyword id="KW-0067">ATP-binding</keyword>
<keyword id="KW-0119">Carbohydrate metabolism</keyword>
<keyword id="KW-0418">Kinase</keyword>
<keyword id="KW-0511">Multifunctional enzyme</keyword>
<keyword id="KW-0547">Nucleotide-binding</keyword>
<keyword id="KW-0548">Nucleotidyltransferase</keyword>
<keyword id="KW-0808">Transferase</keyword>
<comment type="function">
    <text evidence="1">Catalyzes the phosphorylation of D-glycero-D-manno-heptose 7-phosphate at the C-1 position to selectively form D-glycero-beta-D-manno-heptose-1,7-bisphosphate.</text>
</comment>
<comment type="function">
    <text evidence="1">Catalyzes the ADP transfer from ATP to D-glycero-beta-D-manno-heptose 1-phosphate, yielding ADP-D-glycero-beta-D-manno-heptose.</text>
</comment>
<comment type="catalytic activity">
    <reaction evidence="1">
        <text>D-glycero-beta-D-manno-heptose 7-phosphate + ATP = D-glycero-beta-D-manno-heptose 1,7-bisphosphate + ADP + H(+)</text>
        <dbReference type="Rhea" id="RHEA:27473"/>
        <dbReference type="ChEBI" id="CHEBI:15378"/>
        <dbReference type="ChEBI" id="CHEBI:30616"/>
        <dbReference type="ChEBI" id="CHEBI:60204"/>
        <dbReference type="ChEBI" id="CHEBI:60208"/>
        <dbReference type="ChEBI" id="CHEBI:456216"/>
        <dbReference type="EC" id="2.7.1.167"/>
    </reaction>
</comment>
<comment type="catalytic activity">
    <reaction evidence="1">
        <text>D-glycero-beta-D-manno-heptose 1-phosphate + ATP + H(+) = ADP-D-glycero-beta-D-manno-heptose + diphosphate</text>
        <dbReference type="Rhea" id="RHEA:27465"/>
        <dbReference type="ChEBI" id="CHEBI:15378"/>
        <dbReference type="ChEBI" id="CHEBI:30616"/>
        <dbReference type="ChEBI" id="CHEBI:33019"/>
        <dbReference type="ChEBI" id="CHEBI:59967"/>
        <dbReference type="ChEBI" id="CHEBI:61593"/>
        <dbReference type="EC" id="2.7.7.70"/>
    </reaction>
</comment>
<comment type="pathway">
    <text evidence="1">Nucleotide-sugar biosynthesis; ADP-L-glycero-beta-D-manno-heptose biosynthesis; ADP-L-glycero-beta-D-manno-heptose from D-glycero-beta-D-manno-heptose 7-phosphate: step 1/4.</text>
</comment>
<comment type="pathway">
    <text evidence="1">Nucleotide-sugar biosynthesis; ADP-L-glycero-beta-D-manno-heptose biosynthesis; ADP-L-glycero-beta-D-manno-heptose from D-glycero-beta-D-manno-heptose 7-phosphate: step 3/4.</text>
</comment>
<comment type="subunit">
    <text evidence="1">Homodimer.</text>
</comment>
<comment type="similarity">
    <text evidence="1">In the N-terminal section; belongs to the carbohydrate kinase PfkB family.</text>
</comment>
<comment type="similarity">
    <text evidence="1">In the C-terminal section; belongs to the cytidylyltransferase family.</text>
</comment>
<gene>
    <name evidence="1" type="primary">hldE</name>
    <name type="synonym">rfaE</name>
    <name type="ordered locus">HS_0576</name>
</gene>
<evidence type="ECO:0000255" key="1">
    <source>
        <dbReference type="HAMAP-Rule" id="MF_01603"/>
    </source>
</evidence>
<protein>
    <recommendedName>
        <fullName evidence="1">Bifunctional protein HldE</fullName>
    </recommendedName>
    <domain>
        <recommendedName>
            <fullName evidence="1">D-beta-D-heptose 7-phosphate kinase</fullName>
            <ecNumber evidence="1">2.7.1.167</ecNumber>
        </recommendedName>
        <alternativeName>
            <fullName evidence="1">D-beta-D-heptose 7-phosphotransferase</fullName>
        </alternativeName>
        <alternativeName>
            <fullName evidence="1">D-glycero-beta-D-manno-heptose-7-phosphate kinase</fullName>
        </alternativeName>
    </domain>
    <domain>
        <recommendedName>
            <fullName evidence="1">D-beta-D-heptose 1-phosphate adenylyltransferase</fullName>
            <ecNumber evidence="1">2.7.7.70</ecNumber>
        </recommendedName>
        <alternativeName>
            <fullName evidence="1">D-glycero-beta-D-manno-heptose 1-phosphate adenylyltransferase</fullName>
        </alternativeName>
    </domain>
</protein>
<organism>
    <name type="scientific">Histophilus somni (strain 129Pt)</name>
    <name type="common">Haemophilus somnus</name>
    <dbReference type="NCBI Taxonomy" id="205914"/>
    <lineage>
        <taxon>Bacteria</taxon>
        <taxon>Pseudomonadati</taxon>
        <taxon>Pseudomonadota</taxon>
        <taxon>Gammaproteobacteria</taxon>
        <taxon>Pasteurellales</taxon>
        <taxon>Pasteurellaceae</taxon>
        <taxon>Histophilus</taxon>
    </lineage>
</organism>
<dbReference type="EC" id="2.7.1.167" evidence="1"/>
<dbReference type="EC" id="2.7.7.70" evidence="1"/>
<dbReference type="EMBL" id="CP000436">
    <property type="protein sequence ID" value="ABI24853.1"/>
    <property type="molecule type" value="Genomic_DNA"/>
</dbReference>
<dbReference type="SMR" id="Q0I1X5"/>
<dbReference type="KEGG" id="hso:HS_0576"/>
<dbReference type="eggNOG" id="COG0615">
    <property type="taxonomic scope" value="Bacteria"/>
</dbReference>
<dbReference type="eggNOG" id="COG2870">
    <property type="taxonomic scope" value="Bacteria"/>
</dbReference>
<dbReference type="HOGENOM" id="CLU_021150_2_1_6"/>
<dbReference type="UniPathway" id="UPA00356">
    <property type="reaction ID" value="UER00437"/>
</dbReference>
<dbReference type="UniPathway" id="UPA00356">
    <property type="reaction ID" value="UER00439"/>
</dbReference>
<dbReference type="GO" id="GO:0005829">
    <property type="term" value="C:cytosol"/>
    <property type="evidence" value="ECO:0007669"/>
    <property type="project" value="TreeGrafter"/>
</dbReference>
<dbReference type="GO" id="GO:0005524">
    <property type="term" value="F:ATP binding"/>
    <property type="evidence" value="ECO:0007669"/>
    <property type="project" value="UniProtKB-UniRule"/>
</dbReference>
<dbReference type="GO" id="GO:0033785">
    <property type="term" value="F:heptose 7-phosphate kinase activity"/>
    <property type="evidence" value="ECO:0007669"/>
    <property type="project" value="UniProtKB-UniRule"/>
</dbReference>
<dbReference type="GO" id="GO:0033786">
    <property type="term" value="F:heptose-1-phosphate adenylyltransferase activity"/>
    <property type="evidence" value="ECO:0007669"/>
    <property type="project" value="UniProtKB-UniRule"/>
</dbReference>
<dbReference type="GO" id="GO:0016773">
    <property type="term" value="F:phosphotransferase activity, alcohol group as acceptor"/>
    <property type="evidence" value="ECO:0007669"/>
    <property type="project" value="InterPro"/>
</dbReference>
<dbReference type="GO" id="GO:0097171">
    <property type="term" value="P:ADP-L-glycero-beta-D-manno-heptose biosynthetic process"/>
    <property type="evidence" value="ECO:0007669"/>
    <property type="project" value="UniProtKB-UniPathway"/>
</dbReference>
<dbReference type="CDD" id="cd01172">
    <property type="entry name" value="RfaE_like"/>
    <property type="match status" value="1"/>
</dbReference>
<dbReference type="FunFam" id="3.40.1190.20:FF:000002">
    <property type="entry name" value="Bifunctional protein HldE"/>
    <property type="match status" value="1"/>
</dbReference>
<dbReference type="FunFam" id="3.40.50.620:FF:000028">
    <property type="entry name" value="Bifunctional protein HldE"/>
    <property type="match status" value="1"/>
</dbReference>
<dbReference type="Gene3D" id="3.40.1190.20">
    <property type="match status" value="1"/>
</dbReference>
<dbReference type="Gene3D" id="3.40.50.620">
    <property type="entry name" value="HUPs"/>
    <property type="match status" value="1"/>
</dbReference>
<dbReference type="HAMAP" id="MF_01603">
    <property type="entry name" value="HldE"/>
    <property type="match status" value="1"/>
</dbReference>
<dbReference type="InterPro" id="IPR023030">
    <property type="entry name" value="Bifunc_HldE"/>
</dbReference>
<dbReference type="InterPro" id="IPR004821">
    <property type="entry name" value="Cyt_trans-like"/>
</dbReference>
<dbReference type="InterPro" id="IPR011611">
    <property type="entry name" value="PfkB_dom"/>
</dbReference>
<dbReference type="InterPro" id="IPR011913">
    <property type="entry name" value="RfaE_dom_I"/>
</dbReference>
<dbReference type="InterPro" id="IPR011914">
    <property type="entry name" value="RfaE_dom_II"/>
</dbReference>
<dbReference type="InterPro" id="IPR029056">
    <property type="entry name" value="Ribokinase-like"/>
</dbReference>
<dbReference type="InterPro" id="IPR014729">
    <property type="entry name" value="Rossmann-like_a/b/a_fold"/>
</dbReference>
<dbReference type="NCBIfam" id="TIGR00125">
    <property type="entry name" value="cyt_tran_rel"/>
    <property type="match status" value="1"/>
</dbReference>
<dbReference type="NCBIfam" id="NF008454">
    <property type="entry name" value="PRK11316.1"/>
    <property type="match status" value="1"/>
</dbReference>
<dbReference type="NCBIfam" id="TIGR02198">
    <property type="entry name" value="rfaE_dom_I"/>
    <property type="match status" value="1"/>
</dbReference>
<dbReference type="NCBIfam" id="TIGR02199">
    <property type="entry name" value="rfaE_dom_II"/>
    <property type="match status" value="1"/>
</dbReference>
<dbReference type="PANTHER" id="PTHR46969">
    <property type="entry name" value="BIFUNCTIONAL PROTEIN HLDE"/>
    <property type="match status" value="1"/>
</dbReference>
<dbReference type="PANTHER" id="PTHR46969:SF1">
    <property type="entry name" value="BIFUNCTIONAL PROTEIN HLDE"/>
    <property type="match status" value="1"/>
</dbReference>
<dbReference type="Pfam" id="PF01467">
    <property type="entry name" value="CTP_transf_like"/>
    <property type="match status" value="1"/>
</dbReference>
<dbReference type="Pfam" id="PF00294">
    <property type="entry name" value="PfkB"/>
    <property type="match status" value="1"/>
</dbReference>
<dbReference type="SUPFAM" id="SSF52374">
    <property type="entry name" value="Nucleotidylyl transferase"/>
    <property type="match status" value="1"/>
</dbReference>
<dbReference type="SUPFAM" id="SSF53613">
    <property type="entry name" value="Ribokinase-like"/>
    <property type="match status" value="1"/>
</dbReference>
<proteinExistence type="inferred from homology"/>
<sequence length="475" mass="52006">MQYSAQFNRAKVLVLGDVMLDRYWFGATNRISPEAPVPVVRVQENEERAGGAANVAMNIASLNVPVRLLGLTGKDEAARALMQLLEKQSIHCDFTQLDSHPTITKLRILSRHQQLLRLDFEEDFNNITSADLLRKLESAVQNYGALILSDYGKGTLNDVQKMIQIARKVNIPVLIDPKGTDFARYRSATLLTPNMSEFEAVVGKCHSEEEIAEKGLQLIKDLDLSALLVTRSEKGMTLLRPNNAPFHLPTEAKEVFDVTGAGDTVISVLATALADGRSYEEACYLANVAAGIVVGKLGTSTVSTVELENAIHGRTTAGFGIMEESQLKAAVELAKARGEKIVMTNGCFDILHPGHVSYLENARKLGDRLIVAVNTDNSVKRLKGETRPINDLATRMAVLAGLSSVDWLVAFDEDTPQRLIAEILPDLLVKGGDYKPEEIVGSKEVWLNGGEVKVLNFENGCSTTNVIKKIQQLKE</sequence>
<feature type="chain" id="PRO_0000291674" description="Bifunctional protein HldE">
    <location>
        <begin position="1"/>
        <end position="475"/>
    </location>
</feature>
<feature type="region of interest" description="Ribokinase">
    <location>
        <begin position="1"/>
        <end position="317"/>
    </location>
</feature>
<feature type="region of interest" description="Cytidylyltransferase">
    <location>
        <begin position="343"/>
        <end position="475"/>
    </location>
</feature>
<feature type="active site" evidence="1">
    <location>
        <position position="263"/>
    </location>
</feature>
<feature type="binding site" evidence="1">
    <location>
        <begin position="194"/>
        <end position="197"/>
    </location>
    <ligand>
        <name>ATP</name>
        <dbReference type="ChEBI" id="CHEBI:30616"/>
    </ligand>
</feature>